<evidence type="ECO:0000255" key="1">
    <source>
        <dbReference type="HAMAP-Rule" id="MF_01559"/>
    </source>
</evidence>
<dbReference type="EC" id="1.1.-.-" evidence="1"/>
<dbReference type="EMBL" id="AE005674">
    <property type="protein sequence ID" value="AAN45091.1"/>
    <property type="molecule type" value="Genomic_DNA"/>
</dbReference>
<dbReference type="EMBL" id="AE014073">
    <property type="protein sequence ID" value="AAP19101.1"/>
    <property type="molecule type" value="Genomic_DNA"/>
</dbReference>
<dbReference type="RefSeq" id="NP_709384.1">
    <property type="nucleotide sequence ID" value="NC_004337.2"/>
</dbReference>
<dbReference type="RefSeq" id="WP_000586964.1">
    <property type="nucleotide sequence ID" value="NZ_WPGW01000082.1"/>
</dbReference>
<dbReference type="SMR" id="Q83PP7"/>
<dbReference type="STRING" id="198214.SF3644"/>
<dbReference type="PaxDb" id="198214-SF3644"/>
<dbReference type="GeneID" id="1026893"/>
<dbReference type="GeneID" id="93778319"/>
<dbReference type="KEGG" id="sfl:SF3644"/>
<dbReference type="KEGG" id="sfx:S4124"/>
<dbReference type="PATRIC" id="fig|198214.7.peg.4303"/>
<dbReference type="HOGENOM" id="CLU_020639_0_0_6"/>
<dbReference type="Proteomes" id="UP000001006">
    <property type="component" value="Chromosome"/>
</dbReference>
<dbReference type="Proteomes" id="UP000002673">
    <property type="component" value="Chromosome"/>
</dbReference>
<dbReference type="GO" id="GO:0005886">
    <property type="term" value="C:plasma membrane"/>
    <property type="evidence" value="ECO:0007669"/>
    <property type="project" value="UniProtKB-SubCell"/>
</dbReference>
<dbReference type="GO" id="GO:0010181">
    <property type="term" value="F:FMN binding"/>
    <property type="evidence" value="ECO:0007669"/>
    <property type="project" value="InterPro"/>
</dbReference>
<dbReference type="GO" id="GO:0004459">
    <property type="term" value="F:L-lactate dehydrogenase activity"/>
    <property type="evidence" value="ECO:0007669"/>
    <property type="project" value="UniProtKB-UniRule"/>
</dbReference>
<dbReference type="GO" id="GO:0009060">
    <property type="term" value="P:aerobic respiration"/>
    <property type="evidence" value="ECO:0007669"/>
    <property type="project" value="TreeGrafter"/>
</dbReference>
<dbReference type="GO" id="GO:0006089">
    <property type="term" value="P:lactate metabolic process"/>
    <property type="evidence" value="ECO:0007669"/>
    <property type="project" value="UniProtKB-UniRule"/>
</dbReference>
<dbReference type="CDD" id="cd02809">
    <property type="entry name" value="alpha_hydroxyacid_oxid_FMN"/>
    <property type="match status" value="1"/>
</dbReference>
<dbReference type="FunFam" id="3.20.20.70:FF:000029">
    <property type="entry name" value="L-lactate dehydrogenase"/>
    <property type="match status" value="1"/>
</dbReference>
<dbReference type="Gene3D" id="3.20.20.70">
    <property type="entry name" value="Aldolase class I"/>
    <property type="match status" value="1"/>
</dbReference>
<dbReference type="HAMAP" id="MF_01559">
    <property type="entry name" value="L_lact_dehydr"/>
    <property type="match status" value="1"/>
</dbReference>
<dbReference type="InterPro" id="IPR013785">
    <property type="entry name" value="Aldolase_TIM"/>
</dbReference>
<dbReference type="InterPro" id="IPR012133">
    <property type="entry name" value="Alpha-hydoxy_acid_DH_FMN"/>
</dbReference>
<dbReference type="InterPro" id="IPR000262">
    <property type="entry name" value="FMN-dep_DH"/>
</dbReference>
<dbReference type="InterPro" id="IPR037396">
    <property type="entry name" value="FMN_HAD"/>
</dbReference>
<dbReference type="InterPro" id="IPR008259">
    <property type="entry name" value="FMN_hydac_DH_AS"/>
</dbReference>
<dbReference type="InterPro" id="IPR020920">
    <property type="entry name" value="LldD"/>
</dbReference>
<dbReference type="NCBIfam" id="NF033901">
    <property type="entry name" value="L_lactate_LldD"/>
    <property type="match status" value="1"/>
</dbReference>
<dbReference type="NCBIfam" id="NF008398">
    <property type="entry name" value="PRK11197.1"/>
    <property type="match status" value="1"/>
</dbReference>
<dbReference type="PANTHER" id="PTHR10578:SF85">
    <property type="entry name" value="L-LACTATE DEHYDROGENASE"/>
    <property type="match status" value="1"/>
</dbReference>
<dbReference type="PANTHER" id="PTHR10578">
    <property type="entry name" value="S -2-HYDROXY-ACID OXIDASE-RELATED"/>
    <property type="match status" value="1"/>
</dbReference>
<dbReference type="Pfam" id="PF01070">
    <property type="entry name" value="FMN_dh"/>
    <property type="match status" value="1"/>
</dbReference>
<dbReference type="PIRSF" id="PIRSF000138">
    <property type="entry name" value="Al-hdrx_acd_dh"/>
    <property type="match status" value="1"/>
</dbReference>
<dbReference type="SUPFAM" id="SSF51395">
    <property type="entry name" value="FMN-linked oxidoreductases"/>
    <property type="match status" value="1"/>
</dbReference>
<dbReference type="PROSITE" id="PS00557">
    <property type="entry name" value="FMN_HYDROXY_ACID_DH_1"/>
    <property type="match status" value="1"/>
</dbReference>
<dbReference type="PROSITE" id="PS51349">
    <property type="entry name" value="FMN_HYDROXY_ACID_DH_2"/>
    <property type="match status" value="1"/>
</dbReference>
<keyword id="KW-0997">Cell inner membrane</keyword>
<keyword id="KW-1003">Cell membrane</keyword>
<keyword id="KW-0285">Flavoprotein</keyword>
<keyword id="KW-0288">FMN</keyword>
<keyword id="KW-0472">Membrane</keyword>
<keyword id="KW-0560">Oxidoreductase</keyword>
<keyword id="KW-1185">Reference proteome</keyword>
<comment type="function">
    <text evidence="1">Catalyzes the conversion of L-lactate to pyruvate. Is coupled to the respiratory chain.</text>
</comment>
<comment type="catalytic activity">
    <reaction evidence="1">
        <text>(S)-lactate + A = pyruvate + AH2</text>
        <dbReference type="Rhea" id="RHEA:45816"/>
        <dbReference type="ChEBI" id="CHEBI:13193"/>
        <dbReference type="ChEBI" id="CHEBI:15361"/>
        <dbReference type="ChEBI" id="CHEBI:16651"/>
        <dbReference type="ChEBI" id="CHEBI:17499"/>
    </reaction>
</comment>
<comment type="cofactor">
    <cofactor evidence="1">
        <name>FMN</name>
        <dbReference type="ChEBI" id="CHEBI:58210"/>
    </cofactor>
</comment>
<comment type="subcellular location">
    <subcellularLocation>
        <location evidence="1">Cell inner membrane</location>
        <topology evidence="1">Peripheral membrane protein</topology>
    </subcellularLocation>
</comment>
<comment type="similarity">
    <text evidence="1">Belongs to the FMN-dependent alpha-hydroxy acid dehydrogenase family.</text>
</comment>
<name>LLDD_SHIFL</name>
<sequence length="396" mass="42758">MIISAASDYRAAAQRILPPFLFHYMDGGAYSEYTLRRNVEDLSEVALRQRILKNMSDLSLETTLFNEKLSMPVALAPVGLCGMYARRGEVQAAKAADAHGIPFTLSTVSVCPIEEVAPAIKRPMWFQLYVLRDRGFMRNALERAKAAGCSTLVFTVDMPTPGARYRDAHSGMSGPNAAMRRYLQAVTHPQWAWDVGLNGRPHDLGNISAYLGKPTGLEDYIGWLGNNFDPSISWKDLEWIRDFWDGPMVIKGILDPEDARDAVRFGADGIVVSNHGGRQLDGVLSSARALPAIADAVKGDIAILADSGIRNGLDVVRMIALGADTVLLGRAFLYALATAGQAGVANLLNLIEKEMKVAMTLTGAKSISEITQDSLVQGLGKELPTALAPMAKGNAA</sequence>
<organism>
    <name type="scientific">Shigella flexneri</name>
    <dbReference type="NCBI Taxonomy" id="623"/>
    <lineage>
        <taxon>Bacteria</taxon>
        <taxon>Pseudomonadati</taxon>
        <taxon>Pseudomonadota</taxon>
        <taxon>Gammaproteobacteria</taxon>
        <taxon>Enterobacterales</taxon>
        <taxon>Enterobacteriaceae</taxon>
        <taxon>Shigella</taxon>
    </lineage>
</organism>
<accession>Q83PP7</accession>
<accession>Q7BZ23</accession>
<protein>
    <recommendedName>
        <fullName evidence="1">L-lactate dehydrogenase</fullName>
        <ecNumber evidence="1">1.1.-.-</ecNumber>
    </recommendedName>
</protein>
<feature type="chain" id="PRO_0000206350" description="L-lactate dehydrogenase">
    <location>
        <begin position="1"/>
        <end position="396"/>
    </location>
</feature>
<feature type="domain" description="FMN hydroxy acid dehydrogenase" evidence="1">
    <location>
        <begin position="1"/>
        <end position="380"/>
    </location>
</feature>
<feature type="active site" description="Proton acceptor" evidence="1">
    <location>
        <position position="275"/>
    </location>
</feature>
<feature type="binding site" evidence="1">
    <location>
        <position position="24"/>
    </location>
    <ligand>
        <name>substrate</name>
    </ligand>
</feature>
<feature type="binding site" evidence="1">
    <location>
        <position position="106"/>
    </location>
    <ligand>
        <name>FMN</name>
        <dbReference type="ChEBI" id="CHEBI:58210"/>
    </ligand>
</feature>
<feature type="binding site" evidence="1">
    <location>
        <position position="127"/>
    </location>
    <ligand>
        <name>FMN</name>
        <dbReference type="ChEBI" id="CHEBI:58210"/>
    </ligand>
</feature>
<feature type="binding site" evidence="1">
    <location>
        <position position="129"/>
    </location>
    <ligand>
        <name>substrate</name>
    </ligand>
</feature>
<feature type="binding site" evidence="1">
    <location>
        <position position="155"/>
    </location>
    <ligand>
        <name>FMN</name>
        <dbReference type="ChEBI" id="CHEBI:58210"/>
    </ligand>
</feature>
<feature type="binding site" evidence="1">
    <location>
        <position position="164"/>
    </location>
    <ligand>
        <name>substrate</name>
    </ligand>
</feature>
<feature type="binding site" evidence="1">
    <location>
        <position position="251"/>
    </location>
    <ligand>
        <name>FMN</name>
        <dbReference type="ChEBI" id="CHEBI:58210"/>
    </ligand>
</feature>
<feature type="binding site" evidence="1">
    <location>
        <position position="278"/>
    </location>
    <ligand>
        <name>substrate</name>
    </ligand>
</feature>
<feature type="binding site" evidence="1">
    <location>
        <begin position="306"/>
        <end position="330"/>
    </location>
    <ligand>
        <name>FMN</name>
        <dbReference type="ChEBI" id="CHEBI:58210"/>
    </ligand>
</feature>
<proteinExistence type="inferred from homology"/>
<reference key="1">
    <citation type="journal article" date="2002" name="Nucleic Acids Res.">
        <title>Genome sequence of Shigella flexneri 2a: insights into pathogenicity through comparison with genomes of Escherichia coli K12 and O157.</title>
        <authorList>
            <person name="Jin Q."/>
            <person name="Yuan Z."/>
            <person name="Xu J."/>
            <person name="Wang Y."/>
            <person name="Shen Y."/>
            <person name="Lu W."/>
            <person name="Wang J."/>
            <person name="Liu H."/>
            <person name="Yang J."/>
            <person name="Yang F."/>
            <person name="Zhang X."/>
            <person name="Zhang J."/>
            <person name="Yang G."/>
            <person name="Wu H."/>
            <person name="Qu D."/>
            <person name="Dong J."/>
            <person name="Sun L."/>
            <person name="Xue Y."/>
            <person name="Zhao A."/>
            <person name="Gao Y."/>
            <person name="Zhu J."/>
            <person name="Kan B."/>
            <person name="Ding K."/>
            <person name="Chen S."/>
            <person name="Cheng H."/>
            <person name="Yao Z."/>
            <person name="He B."/>
            <person name="Chen R."/>
            <person name="Ma D."/>
            <person name="Qiang B."/>
            <person name="Wen Y."/>
            <person name="Hou Y."/>
            <person name="Yu J."/>
        </authorList>
    </citation>
    <scope>NUCLEOTIDE SEQUENCE [LARGE SCALE GENOMIC DNA]</scope>
    <source>
        <strain>301 / Serotype 2a</strain>
    </source>
</reference>
<reference key="2">
    <citation type="journal article" date="2003" name="Infect. Immun.">
        <title>Complete genome sequence and comparative genomics of Shigella flexneri serotype 2a strain 2457T.</title>
        <authorList>
            <person name="Wei J."/>
            <person name="Goldberg M.B."/>
            <person name="Burland V."/>
            <person name="Venkatesan M.M."/>
            <person name="Deng W."/>
            <person name="Fournier G."/>
            <person name="Mayhew G.F."/>
            <person name="Plunkett G. III"/>
            <person name="Rose D.J."/>
            <person name="Darling A."/>
            <person name="Mau B."/>
            <person name="Perna N.T."/>
            <person name="Payne S.M."/>
            <person name="Runyen-Janecky L.J."/>
            <person name="Zhou S."/>
            <person name="Schwartz D.C."/>
            <person name="Blattner F.R."/>
        </authorList>
    </citation>
    <scope>NUCLEOTIDE SEQUENCE [LARGE SCALE GENOMIC DNA]</scope>
    <source>
        <strain>ATCC 700930 / 2457T / Serotype 2a</strain>
    </source>
</reference>
<gene>
    <name evidence="1" type="primary">lldD</name>
    <name type="ordered locus">SF3644</name>
    <name type="ordered locus">S4124</name>
</gene>